<sequence>MQSYFNELEQVRYEGSQSTNPLAFHHYNPDEMILGKRMADHLRFAACYWHTFCWGGADMFGANAFDRPWQQPGDALALAKRKAEVAFEFFHKLNVPYYCFHDVDVSPEGASLQEYLNNFAVMTDVLAEKQAASGVKLLWGTANCFTHPRYGAGAATNPDPEVFSWAATQVFTAMNATRQLGGENYVLWGGREGYETLLNTDLRQEREQIGRFMQMVVEHKHKTGFQGTLLIEPKPQEPTKHQYDYDVATVYGFLKQFGLEKEIKVNIEANHATLAGHSFHHEIASAIALGIFGSVDANRGDPQLGWDTDQFPNSVEENTLVMFEILKAGGFTTGGLNFDAKVRRQSTDKYDLFYGHIGAMDTMALALKFAAKMIEDGQLDQIVAKRYAGWNSELGQQILQGKMSLEELSRYASQHNLNPQHQSGHQELLENKVNRYLFG</sequence>
<comment type="catalytic activity">
    <reaction evidence="1">
        <text>alpha-D-xylose = alpha-D-xylulofuranose</text>
        <dbReference type="Rhea" id="RHEA:22816"/>
        <dbReference type="ChEBI" id="CHEBI:28518"/>
        <dbReference type="ChEBI" id="CHEBI:188998"/>
        <dbReference type="EC" id="5.3.1.5"/>
    </reaction>
</comment>
<comment type="cofactor">
    <cofactor evidence="1">
        <name>Mg(2+)</name>
        <dbReference type="ChEBI" id="CHEBI:18420"/>
    </cofactor>
    <text evidence="1">Binds 2 magnesium ions per subunit.</text>
</comment>
<comment type="subunit">
    <text evidence="1">Homotetramer.</text>
</comment>
<comment type="subcellular location">
    <subcellularLocation>
        <location evidence="1">Cytoplasm</location>
    </subcellularLocation>
</comment>
<comment type="similarity">
    <text evidence="1">Belongs to the xylose isomerase family.</text>
</comment>
<feature type="chain" id="PRO_1000026461" description="Xylose isomerase">
    <location>
        <begin position="1"/>
        <end position="439"/>
    </location>
</feature>
<feature type="active site" evidence="1">
    <location>
        <position position="101"/>
    </location>
</feature>
<feature type="active site" evidence="1">
    <location>
        <position position="104"/>
    </location>
</feature>
<feature type="binding site" evidence="1">
    <location>
        <position position="232"/>
    </location>
    <ligand>
        <name>Mg(2+)</name>
        <dbReference type="ChEBI" id="CHEBI:18420"/>
        <label>1</label>
    </ligand>
</feature>
<feature type="binding site" evidence="1">
    <location>
        <position position="268"/>
    </location>
    <ligand>
        <name>Mg(2+)</name>
        <dbReference type="ChEBI" id="CHEBI:18420"/>
        <label>1</label>
    </ligand>
</feature>
<feature type="binding site" evidence="1">
    <location>
        <position position="268"/>
    </location>
    <ligand>
        <name>Mg(2+)</name>
        <dbReference type="ChEBI" id="CHEBI:18420"/>
        <label>2</label>
    </ligand>
</feature>
<feature type="binding site" evidence="1">
    <location>
        <position position="271"/>
    </location>
    <ligand>
        <name>Mg(2+)</name>
        <dbReference type="ChEBI" id="CHEBI:18420"/>
        <label>2</label>
    </ligand>
</feature>
<feature type="binding site" evidence="1">
    <location>
        <position position="296"/>
    </location>
    <ligand>
        <name>Mg(2+)</name>
        <dbReference type="ChEBI" id="CHEBI:18420"/>
        <label>1</label>
    </ligand>
</feature>
<feature type="binding site" evidence="1">
    <location>
        <position position="307"/>
    </location>
    <ligand>
        <name>Mg(2+)</name>
        <dbReference type="ChEBI" id="CHEBI:18420"/>
        <label>2</label>
    </ligand>
</feature>
<feature type="binding site" evidence="1">
    <location>
        <position position="309"/>
    </location>
    <ligand>
        <name>Mg(2+)</name>
        <dbReference type="ChEBI" id="CHEBI:18420"/>
        <label>2</label>
    </ligand>
</feature>
<feature type="binding site" evidence="1">
    <location>
        <position position="339"/>
    </location>
    <ligand>
        <name>Mg(2+)</name>
        <dbReference type="ChEBI" id="CHEBI:18420"/>
        <label>1</label>
    </ligand>
</feature>
<reference key="1">
    <citation type="journal article" date="2006" name="J. Bacteriol.">
        <title>Complete genome sequence of Yersinia pestis strains Antiqua and Nepal516: evidence of gene reduction in an emerging pathogen.</title>
        <authorList>
            <person name="Chain P.S.G."/>
            <person name="Hu P."/>
            <person name="Malfatti S.A."/>
            <person name="Radnedge L."/>
            <person name="Larimer F."/>
            <person name="Vergez L.M."/>
            <person name="Worsham P."/>
            <person name="Chu M.C."/>
            <person name="Andersen G.L."/>
        </authorList>
    </citation>
    <scope>NUCLEOTIDE SEQUENCE [LARGE SCALE GENOMIC DNA]</scope>
    <source>
        <strain>Nepal516</strain>
    </source>
</reference>
<reference key="2">
    <citation type="submission" date="2009-04" db="EMBL/GenBank/DDBJ databases">
        <title>Yersinia pestis Nepal516A whole genome shotgun sequencing project.</title>
        <authorList>
            <person name="Plunkett G. III"/>
            <person name="Anderson B.D."/>
            <person name="Baumler D.J."/>
            <person name="Burland V."/>
            <person name="Cabot E.L."/>
            <person name="Glasner J.D."/>
            <person name="Mau B."/>
            <person name="Neeno-Eckwall E."/>
            <person name="Perna N.T."/>
            <person name="Munk A.C."/>
            <person name="Tapia R."/>
            <person name="Green L.D."/>
            <person name="Rogers Y.C."/>
            <person name="Detter J.C."/>
            <person name="Bruce D.C."/>
            <person name="Brettin T.S."/>
        </authorList>
    </citation>
    <scope>NUCLEOTIDE SEQUENCE [LARGE SCALE GENOMIC DNA]</scope>
    <source>
        <strain>Nepal516</strain>
    </source>
</reference>
<accession>Q1CDB8</accession>
<accession>D1Q233</accession>
<gene>
    <name evidence="1" type="primary">xylA</name>
    <name type="ordered locus">YPN_3685</name>
    <name type="ORF">YP516_4188</name>
</gene>
<evidence type="ECO:0000255" key="1">
    <source>
        <dbReference type="HAMAP-Rule" id="MF_00455"/>
    </source>
</evidence>
<protein>
    <recommendedName>
        <fullName evidence="1">Xylose isomerase</fullName>
        <ecNumber evidence="1">5.3.1.5</ecNumber>
    </recommendedName>
</protein>
<keyword id="KW-0119">Carbohydrate metabolism</keyword>
<keyword id="KW-0963">Cytoplasm</keyword>
<keyword id="KW-0413">Isomerase</keyword>
<keyword id="KW-0460">Magnesium</keyword>
<keyword id="KW-0479">Metal-binding</keyword>
<keyword id="KW-0859">Xylose metabolism</keyword>
<name>XYLA_YERPN</name>
<proteinExistence type="inferred from homology"/>
<organism>
    <name type="scientific">Yersinia pestis bv. Antiqua (strain Nepal516)</name>
    <dbReference type="NCBI Taxonomy" id="377628"/>
    <lineage>
        <taxon>Bacteria</taxon>
        <taxon>Pseudomonadati</taxon>
        <taxon>Pseudomonadota</taxon>
        <taxon>Gammaproteobacteria</taxon>
        <taxon>Enterobacterales</taxon>
        <taxon>Yersiniaceae</taxon>
        <taxon>Yersinia</taxon>
    </lineage>
</organism>
<dbReference type="EC" id="5.3.1.5" evidence="1"/>
<dbReference type="EMBL" id="CP000305">
    <property type="protein sequence ID" value="ABG20012.1"/>
    <property type="molecule type" value="Genomic_DNA"/>
</dbReference>
<dbReference type="EMBL" id="ACNQ01000019">
    <property type="protein sequence ID" value="EEO74586.1"/>
    <property type="molecule type" value="Genomic_DNA"/>
</dbReference>
<dbReference type="RefSeq" id="WP_002209593.1">
    <property type="nucleotide sequence ID" value="NZ_ACNQ01000019.1"/>
</dbReference>
<dbReference type="SMR" id="Q1CDB8"/>
<dbReference type="GeneID" id="57974675"/>
<dbReference type="KEGG" id="ypn:YPN_3685"/>
<dbReference type="HOGENOM" id="CLU_037261_1_0_6"/>
<dbReference type="Proteomes" id="UP000008936">
    <property type="component" value="Chromosome"/>
</dbReference>
<dbReference type="GO" id="GO:0005737">
    <property type="term" value="C:cytoplasm"/>
    <property type="evidence" value="ECO:0007669"/>
    <property type="project" value="UniProtKB-SubCell"/>
</dbReference>
<dbReference type="GO" id="GO:0000287">
    <property type="term" value="F:magnesium ion binding"/>
    <property type="evidence" value="ECO:0007669"/>
    <property type="project" value="UniProtKB-UniRule"/>
</dbReference>
<dbReference type="GO" id="GO:0009045">
    <property type="term" value="F:xylose isomerase activity"/>
    <property type="evidence" value="ECO:0007669"/>
    <property type="project" value="UniProtKB-UniRule"/>
</dbReference>
<dbReference type="GO" id="GO:0042732">
    <property type="term" value="P:D-xylose metabolic process"/>
    <property type="evidence" value="ECO:0007669"/>
    <property type="project" value="UniProtKB-UniRule"/>
</dbReference>
<dbReference type="FunFam" id="3.20.20.150:FF:000002">
    <property type="entry name" value="Xylose isomerase"/>
    <property type="match status" value="1"/>
</dbReference>
<dbReference type="Gene3D" id="3.20.20.150">
    <property type="entry name" value="Divalent-metal-dependent TIM barrel enzymes"/>
    <property type="match status" value="1"/>
</dbReference>
<dbReference type="HAMAP" id="MF_00455">
    <property type="entry name" value="Xylose_isom_A"/>
    <property type="match status" value="1"/>
</dbReference>
<dbReference type="InterPro" id="IPR036237">
    <property type="entry name" value="Xyl_isomerase-like_sf"/>
</dbReference>
<dbReference type="InterPro" id="IPR013452">
    <property type="entry name" value="Xylose_isom_bac"/>
</dbReference>
<dbReference type="InterPro" id="IPR001998">
    <property type="entry name" value="Xylose_isomerase"/>
</dbReference>
<dbReference type="NCBIfam" id="NF003998">
    <property type="entry name" value="PRK05474.1"/>
    <property type="match status" value="1"/>
</dbReference>
<dbReference type="NCBIfam" id="TIGR02630">
    <property type="entry name" value="xylose_isom_A"/>
    <property type="match status" value="1"/>
</dbReference>
<dbReference type="PANTHER" id="PTHR48408">
    <property type="match status" value="1"/>
</dbReference>
<dbReference type="PANTHER" id="PTHR48408:SF1">
    <property type="entry name" value="XYLOSE ISOMERASE"/>
    <property type="match status" value="1"/>
</dbReference>
<dbReference type="PRINTS" id="PR00688">
    <property type="entry name" value="XYLOSISMRASE"/>
</dbReference>
<dbReference type="SUPFAM" id="SSF51658">
    <property type="entry name" value="Xylose isomerase-like"/>
    <property type="match status" value="1"/>
</dbReference>
<dbReference type="PROSITE" id="PS51415">
    <property type="entry name" value="XYLOSE_ISOMERASE"/>
    <property type="match status" value="1"/>
</dbReference>